<name>SNAG_DICDI</name>
<gene>
    <name type="primary">snpC</name>
    <name type="ORF">DDB_G0269186</name>
</gene>
<proteinExistence type="evidence at protein level"/>
<comment type="function">
    <text evidence="1 4">May be required for vesicular transport between the endoplasmic reticulum and the Golgi apparatus (By similarity). Involved in vesicle fusion with nsfA and probably SNARE proteins.</text>
</comment>
<comment type="subunit">
    <text evidence="3 4">Interacts with nsfA and probably SNARE proteins.</text>
</comment>
<comment type="interaction">
    <interactant intactId="EBI-1810184">
        <id>Q9U9R7</id>
    </interactant>
    <interactant intactId="EBI-1810142">
        <id>Q75JI3</id>
        <label>nsfA</label>
    </interactant>
    <organismsDiffer>false</organismsDiffer>
    <experiments>2</experiments>
</comment>
<comment type="subcellular location">
    <subcellularLocation>
        <location evidence="3">Cytoplasmic vesicle membrane</location>
        <topology evidence="3">Peripheral membrane protein</topology>
    </subcellularLocation>
</comment>
<comment type="similarity">
    <text evidence="5">Belongs to the SNAP family.</text>
</comment>
<protein>
    <recommendedName>
        <fullName>Gamma-soluble NSF attachment protein</fullName>
        <shortName>SNAP-gamma</shortName>
    </recommendedName>
    <alternativeName>
        <fullName>N-ethylmaleimide-sensitive factor attachment protein gamma</fullName>
    </alternativeName>
</protein>
<accession>Q9U9R7</accession>
<accession>Q55BN4</accession>
<evidence type="ECO:0000250" key="1"/>
<evidence type="ECO:0000256" key="2">
    <source>
        <dbReference type="SAM" id="MobiDB-lite"/>
    </source>
</evidence>
<evidence type="ECO:0000269" key="3">
    <source>
    </source>
</evidence>
<evidence type="ECO:0000269" key="4">
    <source>
    </source>
</evidence>
<evidence type="ECO:0000305" key="5"/>
<dbReference type="EMBL" id="AF157836">
    <property type="protein sequence ID" value="AAD45894.1"/>
    <property type="molecule type" value="Genomic_DNA"/>
</dbReference>
<dbReference type="EMBL" id="AAFI02000005">
    <property type="protein sequence ID" value="EAL71943.2"/>
    <property type="molecule type" value="Genomic_DNA"/>
</dbReference>
<dbReference type="RefSeq" id="XP_646797.2">
    <property type="nucleotide sequence ID" value="XM_641705.2"/>
</dbReference>
<dbReference type="SMR" id="Q9U9R7"/>
<dbReference type="FunCoup" id="Q9U9R7">
    <property type="interactions" value="300"/>
</dbReference>
<dbReference type="IntAct" id="Q9U9R7">
    <property type="interactions" value="2"/>
</dbReference>
<dbReference type="STRING" id="44689.Q9U9R7"/>
<dbReference type="PaxDb" id="44689-DDB0191120"/>
<dbReference type="EnsemblProtists" id="EAL71943">
    <property type="protein sequence ID" value="EAL71943"/>
    <property type="gene ID" value="DDB_G0269186"/>
</dbReference>
<dbReference type="GeneID" id="8617770"/>
<dbReference type="KEGG" id="ddi:DDB_G0269186"/>
<dbReference type="dictyBase" id="DDB_G0269186">
    <property type="gene designation" value="snpC"/>
</dbReference>
<dbReference type="VEuPathDB" id="AmoebaDB:DDB_G0269186"/>
<dbReference type="eggNOG" id="KOG1585">
    <property type="taxonomic scope" value="Eukaryota"/>
</dbReference>
<dbReference type="HOGENOM" id="CLU_063974_2_0_1"/>
<dbReference type="InParanoid" id="Q9U9R7"/>
<dbReference type="OMA" id="RSWFHAA"/>
<dbReference type="PhylomeDB" id="Q9U9R7"/>
<dbReference type="Reactome" id="R-DDI-204005">
    <property type="pathway name" value="COPII-mediated vesicle transport"/>
</dbReference>
<dbReference type="Reactome" id="R-DDI-6807878">
    <property type="pathway name" value="COPI-mediated anterograde transport"/>
</dbReference>
<dbReference type="Reactome" id="R-DDI-6811434">
    <property type="pathway name" value="COPI-dependent Golgi-to-ER retrograde traffic"/>
</dbReference>
<dbReference type="Reactome" id="R-DDI-6811438">
    <property type="pathway name" value="Intra-Golgi traffic"/>
</dbReference>
<dbReference type="Reactome" id="R-DDI-6811440">
    <property type="pathway name" value="Retrograde transport at the Trans-Golgi-Network"/>
</dbReference>
<dbReference type="PRO" id="PR:Q9U9R7"/>
<dbReference type="Proteomes" id="UP000002195">
    <property type="component" value="Chromosome 1"/>
</dbReference>
<dbReference type="GO" id="GO:0030659">
    <property type="term" value="C:cytoplasmic vesicle membrane"/>
    <property type="evidence" value="ECO:0007669"/>
    <property type="project" value="UniProtKB-SubCell"/>
</dbReference>
<dbReference type="GO" id="GO:0045335">
    <property type="term" value="C:phagocytic vesicle"/>
    <property type="evidence" value="ECO:0007005"/>
    <property type="project" value="dictyBase"/>
</dbReference>
<dbReference type="GO" id="GO:0031201">
    <property type="term" value="C:SNARE complex"/>
    <property type="evidence" value="ECO:0000318"/>
    <property type="project" value="GO_Central"/>
</dbReference>
<dbReference type="GO" id="GO:0005483">
    <property type="term" value="F:soluble NSF attachment protein activity"/>
    <property type="evidence" value="ECO:0000314"/>
    <property type="project" value="dictyBase"/>
</dbReference>
<dbReference type="GO" id="GO:0019905">
    <property type="term" value="F:syntaxin binding"/>
    <property type="evidence" value="ECO:0000318"/>
    <property type="project" value="GO_Central"/>
</dbReference>
<dbReference type="GO" id="GO:0006886">
    <property type="term" value="P:intracellular protein transport"/>
    <property type="evidence" value="ECO:0000318"/>
    <property type="project" value="GO_Central"/>
</dbReference>
<dbReference type="GO" id="GO:0016192">
    <property type="term" value="P:vesicle-mediated transport"/>
    <property type="evidence" value="ECO:0007669"/>
    <property type="project" value="UniProtKB-KW"/>
</dbReference>
<dbReference type="CDD" id="cd15832">
    <property type="entry name" value="SNAP"/>
    <property type="match status" value="1"/>
</dbReference>
<dbReference type="FunFam" id="1.25.40.10:FF:002646">
    <property type="entry name" value="Soluble NSF attachment protein gamma isoform"/>
    <property type="match status" value="1"/>
</dbReference>
<dbReference type="Gene3D" id="1.25.40.10">
    <property type="entry name" value="Tetratricopeptide repeat domain"/>
    <property type="match status" value="1"/>
</dbReference>
<dbReference type="InterPro" id="IPR000744">
    <property type="entry name" value="NSF_attach"/>
</dbReference>
<dbReference type="InterPro" id="IPR011990">
    <property type="entry name" value="TPR-like_helical_dom_sf"/>
</dbReference>
<dbReference type="PANTHER" id="PTHR13768:SF2">
    <property type="entry name" value="GAMMA-SOLUBLE NSF ATTACHMENT PROTEIN"/>
    <property type="match status" value="1"/>
</dbReference>
<dbReference type="PANTHER" id="PTHR13768">
    <property type="entry name" value="SOLUBLE NSF ATTACHMENT PROTEIN SNAP"/>
    <property type="match status" value="1"/>
</dbReference>
<dbReference type="Pfam" id="PF14938">
    <property type="entry name" value="SNAP"/>
    <property type="match status" value="1"/>
</dbReference>
<dbReference type="SUPFAM" id="SSF48452">
    <property type="entry name" value="TPR-like"/>
    <property type="match status" value="1"/>
</dbReference>
<reference key="1">
    <citation type="journal article" date="2000" name="Eur. J. Biochem.">
        <title>Functional and molecular identification of novel members of the ubiquitous membrane fusion proteins alpha- and gamma-SNAP (soluble N-ethylmaleimide-sensitive factor-attachment proteins) families in Dictyostelium discoideum.</title>
        <authorList>
            <person name="Weidenhaupt M."/>
            <person name="Bruckert F."/>
            <person name="Louwagie M."/>
            <person name="Garin J."/>
            <person name="Satre M."/>
        </authorList>
    </citation>
    <scope>NUCLEOTIDE SEQUENCE [GENOMIC DNA]</scope>
    <scope>SUBCELLULAR LOCATION</scope>
    <scope>INTERACTION WITH NSFA</scope>
    <source>
        <strain>AX2</strain>
    </source>
</reference>
<reference key="2">
    <citation type="journal article" date="2005" name="Nature">
        <title>The genome of the social amoeba Dictyostelium discoideum.</title>
        <authorList>
            <person name="Eichinger L."/>
            <person name="Pachebat J.A."/>
            <person name="Gloeckner G."/>
            <person name="Rajandream M.A."/>
            <person name="Sucgang R."/>
            <person name="Berriman M."/>
            <person name="Song J."/>
            <person name="Olsen R."/>
            <person name="Szafranski K."/>
            <person name="Xu Q."/>
            <person name="Tunggal B."/>
            <person name="Kummerfeld S."/>
            <person name="Madera M."/>
            <person name="Konfortov B.A."/>
            <person name="Rivero F."/>
            <person name="Bankier A.T."/>
            <person name="Lehmann R."/>
            <person name="Hamlin N."/>
            <person name="Davies R."/>
            <person name="Gaudet P."/>
            <person name="Fey P."/>
            <person name="Pilcher K."/>
            <person name="Chen G."/>
            <person name="Saunders D."/>
            <person name="Sodergren E.J."/>
            <person name="Davis P."/>
            <person name="Kerhornou A."/>
            <person name="Nie X."/>
            <person name="Hall N."/>
            <person name="Anjard C."/>
            <person name="Hemphill L."/>
            <person name="Bason N."/>
            <person name="Farbrother P."/>
            <person name="Desany B."/>
            <person name="Just E."/>
            <person name="Morio T."/>
            <person name="Rost R."/>
            <person name="Churcher C.M."/>
            <person name="Cooper J."/>
            <person name="Haydock S."/>
            <person name="van Driessche N."/>
            <person name="Cronin A."/>
            <person name="Goodhead I."/>
            <person name="Muzny D.M."/>
            <person name="Mourier T."/>
            <person name="Pain A."/>
            <person name="Lu M."/>
            <person name="Harper D."/>
            <person name="Lindsay R."/>
            <person name="Hauser H."/>
            <person name="James K.D."/>
            <person name="Quiles M."/>
            <person name="Madan Babu M."/>
            <person name="Saito T."/>
            <person name="Buchrieser C."/>
            <person name="Wardroper A."/>
            <person name="Felder M."/>
            <person name="Thangavelu M."/>
            <person name="Johnson D."/>
            <person name="Knights A."/>
            <person name="Loulseged H."/>
            <person name="Mungall K.L."/>
            <person name="Oliver K."/>
            <person name="Price C."/>
            <person name="Quail M.A."/>
            <person name="Urushihara H."/>
            <person name="Hernandez J."/>
            <person name="Rabbinowitsch E."/>
            <person name="Steffen D."/>
            <person name="Sanders M."/>
            <person name="Ma J."/>
            <person name="Kohara Y."/>
            <person name="Sharp S."/>
            <person name="Simmonds M.N."/>
            <person name="Spiegler S."/>
            <person name="Tivey A."/>
            <person name="Sugano S."/>
            <person name="White B."/>
            <person name="Walker D."/>
            <person name="Woodward J.R."/>
            <person name="Winckler T."/>
            <person name="Tanaka Y."/>
            <person name="Shaulsky G."/>
            <person name="Schleicher M."/>
            <person name="Weinstock G.M."/>
            <person name="Rosenthal A."/>
            <person name="Cox E.C."/>
            <person name="Chisholm R.L."/>
            <person name="Gibbs R.A."/>
            <person name="Loomis W.F."/>
            <person name="Platzer M."/>
            <person name="Kay R.R."/>
            <person name="Williams J.G."/>
            <person name="Dear P.H."/>
            <person name="Noegel A.A."/>
            <person name="Barrell B.G."/>
            <person name="Kuspa A."/>
        </authorList>
    </citation>
    <scope>NUCLEOTIDE SEQUENCE [LARGE SCALE GENOMIC DNA]</scope>
    <source>
        <strain>AX4</strain>
    </source>
</reference>
<reference key="3">
    <citation type="journal article" date="2002" name="Biochem. J.">
        <title>Syntaxin 7, syntaxin 8, Vti1 and VAMP7 (vesicle-associated membrane protein 7) form an active SNARE complex for early macropinocytic compartment fusion in Dictyostelium discoideum.</title>
        <authorList>
            <person name="Bogdanovic A."/>
            <person name="Bennett N."/>
            <person name="Kieffer S."/>
            <person name="Louwagie M."/>
            <person name="Morio T."/>
            <person name="Garin J."/>
            <person name="Satre M."/>
            <person name="Bruckert F."/>
        </authorList>
    </citation>
    <scope>FUNCTION</scope>
    <scope>INTERACTION WITH SYN7A</scope>
    <scope>IDENTIFICATION BY MASS SPECTROMETRY</scope>
</reference>
<reference key="4">
    <citation type="journal article" date="2006" name="Mol. Cell. Proteomics">
        <title>Proteomics fingerprinting of phagosome maturation and evidence for the role of a Galpha during uptake.</title>
        <authorList>
            <person name="Gotthardt D."/>
            <person name="Blancheteau V."/>
            <person name="Bosserhoff A."/>
            <person name="Ruppert T."/>
            <person name="Delorenzi M."/>
            <person name="Soldati T."/>
        </authorList>
    </citation>
    <scope>IDENTIFICATION BY MASS SPECTROMETRY [LARGE SCALE ANALYSIS]</scope>
    <source>
        <strain>AX2</strain>
    </source>
</reference>
<keyword id="KW-0968">Cytoplasmic vesicle</keyword>
<keyword id="KW-0931">ER-Golgi transport</keyword>
<keyword id="KW-0472">Membrane</keyword>
<keyword id="KW-0653">Protein transport</keyword>
<keyword id="KW-1185">Reference proteome</keyword>
<keyword id="KW-0813">Transport</keyword>
<organism>
    <name type="scientific">Dictyostelium discoideum</name>
    <name type="common">Social amoeba</name>
    <dbReference type="NCBI Taxonomy" id="44689"/>
    <lineage>
        <taxon>Eukaryota</taxon>
        <taxon>Amoebozoa</taxon>
        <taxon>Evosea</taxon>
        <taxon>Eumycetozoa</taxon>
        <taxon>Dictyostelia</taxon>
        <taxon>Dictyosteliales</taxon>
        <taxon>Dictyosteliaceae</taxon>
        <taxon>Dictyostelium</taxon>
    </lineage>
</organism>
<sequence>MSDKLKSNKKLEGETFMKEGDKLSKTNIFRWKADWDSAALAYEKAANAFRSAKIYDSAKYCFLRLSLCQTHMDVYYLAAKSMENASAMAKELKETQECANLLLESCKLYRTNGNSFQAADTMTKAAKLLEDIDLNQTIKLLTDACELFELDDKDHFSGDTFKQTISMLLKHKKYTEAVDLMILQNRVFVKLEQNHDLHKSCLSVITISLATDDIVASKKYYEQFLDYPSFIHSQEGTTAQELITAFDNHDVDGVKKIVSRHIFNFLDNQVAKIAKNLSISKDSLNPTINSTAPQQQYSNTTTTTTNNTNNNNPTSQQDDDEDVL</sequence>
<feature type="chain" id="PRO_0000327892" description="Gamma-soluble NSF attachment protein">
    <location>
        <begin position="1"/>
        <end position="324"/>
    </location>
</feature>
<feature type="region of interest" description="Disordered" evidence="2">
    <location>
        <begin position="285"/>
        <end position="324"/>
    </location>
</feature>
<feature type="compositionally biased region" description="Polar residues" evidence="2">
    <location>
        <begin position="285"/>
        <end position="298"/>
    </location>
</feature>
<feature type="compositionally biased region" description="Low complexity" evidence="2">
    <location>
        <begin position="299"/>
        <end position="312"/>
    </location>
</feature>